<accession>B7MG43</accession>
<gene>
    <name evidence="1" type="primary">nuoK</name>
    <name type="ordered locus">ECS88_2426</name>
</gene>
<organism>
    <name type="scientific">Escherichia coli O45:K1 (strain S88 / ExPEC)</name>
    <dbReference type="NCBI Taxonomy" id="585035"/>
    <lineage>
        <taxon>Bacteria</taxon>
        <taxon>Pseudomonadati</taxon>
        <taxon>Pseudomonadota</taxon>
        <taxon>Gammaproteobacteria</taxon>
        <taxon>Enterobacterales</taxon>
        <taxon>Enterobacteriaceae</taxon>
        <taxon>Escherichia</taxon>
    </lineage>
</organism>
<feature type="chain" id="PRO_0000390054" description="NADH-quinone oxidoreductase subunit K">
    <location>
        <begin position="1"/>
        <end position="100"/>
    </location>
</feature>
<feature type="transmembrane region" description="Helical" evidence="1">
    <location>
        <begin position="4"/>
        <end position="24"/>
    </location>
</feature>
<feature type="transmembrane region" description="Helical" evidence="1">
    <location>
        <begin position="28"/>
        <end position="48"/>
    </location>
</feature>
<feature type="transmembrane region" description="Helical" evidence="1">
    <location>
        <begin position="60"/>
        <end position="80"/>
    </location>
</feature>
<dbReference type="EC" id="7.1.1.-" evidence="1"/>
<dbReference type="EMBL" id="CU928161">
    <property type="protein sequence ID" value="CAR03705.1"/>
    <property type="molecule type" value="Genomic_DNA"/>
</dbReference>
<dbReference type="RefSeq" id="WP_000612644.1">
    <property type="nucleotide sequence ID" value="NC_011742.1"/>
</dbReference>
<dbReference type="SMR" id="B7MG43"/>
<dbReference type="GeneID" id="93033872"/>
<dbReference type="KEGG" id="ecz:ECS88_2426"/>
<dbReference type="HOGENOM" id="CLU_144724_0_1_6"/>
<dbReference type="Proteomes" id="UP000000747">
    <property type="component" value="Chromosome"/>
</dbReference>
<dbReference type="GO" id="GO:0030964">
    <property type="term" value="C:NADH dehydrogenase complex"/>
    <property type="evidence" value="ECO:0007669"/>
    <property type="project" value="TreeGrafter"/>
</dbReference>
<dbReference type="GO" id="GO:0005886">
    <property type="term" value="C:plasma membrane"/>
    <property type="evidence" value="ECO:0007669"/>
    <property type="project" value="UniProtKB-SubCell"/>
</dbReference>
<dbReference type="GO" id="GO:0050136">
    <property type="term" value="F:NADH:ubiquinone reductase (non-electrogenic) activity"/>
    <property type="evidence" value="ECO:0007669"/>
    <property type="project" value="UniProtKB-UniRule"/>
</dbReference>
<dbReference type="GO" id="GO:0048038">
    <property type="term" value="F:quinone binding"/>
    <property type="evidence" value="ECO:0007669"/>
    <property type="project" value="UniProtKB-KW"/>
</dbReference>
<dbReference type="GO" id="GO:0042773">
    <property type="term" value="P:ATP synthesis coupled electron transport"/>
    <property type="evidence" value="ECO:0007669"/>
    <property type="project" value="InterPro"/>
</dbReference>
<dbReference type="FunFam" id="1.10.287.3510:FF:000001">
    <property type="entry name" value="NADH-quinone oxidoreductase subunit K"/>
    <property type="match status" value="1"/>
</dbReference>
<dbReference type="Gene3D" id="1.10.287.3510">
    <property type="match status" value="1"/>
</dbReference>
<dbReference type="HAMAP" id="MF_01456">
    <property type="entry name" value="NDH1_NuoK"/>
    <property type="match status" value="1"/>
</dbReference>
<dbReference type="InterPro" id="IPR001133">
    <property type="entry name" value="NADH_UbQ_OxRdtase_chain4L/K"/>
</dbReference>
<dbReference type="InterPro" id="IPR039428">
    <property type="entry name" value="NUOK/Mnh_C1-like"/>
</dbReference>
<dbReference type="NCBIfam" id="NF004319">
    <property type="entry name" value="PRK05715.1-1"/>
    <property type="match status" value="1"/>
</dbReference>
<dbReference type="NCBIfam" id="NF004320">
    <property type="entry name" value="PRK05715.1-2"/>
    <property type="match status" value="1"/>
</dbReference>
<dbReference type="PANTHER" id="PTHR11434:SF16">
    <property type="entry name" value="NADH-UBIQUINONE OXIDOREDUCTASE CHAIN 4L"/>
    <property type="match status" value="1"/>
</dbReference>
<dbReference type="PANTHER" id="PTHR11434">
    <property type="entry name" value="NADH-UBIQUINONE OXIDOREDUCTASE SUBUNIT ND4L"/>
    <property type="match status" value="1"/>
</dbReference>
<dbReference type="Pfam" id="PF00420">
    <property type="entry name" value="Oxidored_q2"/>
    <property type="match status" value="1"/>
</dbReference>
<proteinExistence type="inferred from homology"/>
<protein>
    <recommendedName>
        <fullName evidence="1">NADH-quinone oxidoreductase subunit K</fullName>
        <ecNumber evidence="1">7.1.1.-</ecNumber>
    </recommendedName>
    <alternativeName>
        <fullName evidence="1">NADH dehydrogenase I subunit K</fullName>
    </alternativeName>
    <alternativeName>
        <fullName evidence="1">NDH-1 subunit K</fullName>
    </alternativeName>
</protein>
<reference key="1">
    <citation type="journal article" date="2009" name="PLoS Genet.">
        <title>Organised genome dynamics in the Escherichia coli species results in highly diverse adaptive paths.</title>
        <authorList>
            <person name="Touchon M."/>
            <person name="Hoede C."/>
            <person name="Tenaillon O."/>
            <person name="Barbe V."/>
            <person name="Baeriswyl S."/>
            <person name="Bidet P."/>
            <person name="Bingen E."/>
            <person name="Bonacorsi S."/>
            <person name="Bouchier C."/>
            <person name="Bouvet O."/>
            <person name="Calteau A."/>
            <person name="Chiapello H."/>
            <person name="Clermont O."/>
            <person name="Cruveiller S."/>
            <person name="Danchin A."/>
            <person name="Diard M."/>
            <person name="Dossat C."/>
            <person name="Karoui M.E."/>
            <person name="Frapy E."/>
            <person name="Garry L."/>
            <person name="Ghigo J.M."/>
            <person name="Gilles A.M."/>
            <person name="Johnson J."/>
            <person name="Le Bouguenec C."/>
            <person name="Lescat M."/>
            <person name="Mangenot S."/>
            <person name="Martinez-Jehanne V."/>
            <person name="Matic I."/>
            <person name="Nassif X."/>
            <person name="Oztas S."/>
            <person name="Petit M.A."/>
            <person name="Pichon C."/>
            <person name="Rouy Z."/>
            <person name="Ruf C.S."/>
            <person name="Schneider D."/>
            <person name="Tourret J."/>
            <person name="Vacherie B."/>
            <person name="Vallenet D."/>
            <person name="Medigue C."/>
            <person name="Rocha E.P.C."/>
            <person name="Denamur E."/>
        </authorList>
    </citation>
    <scope>NUCLEOTIDE SEQUENCE [LARGE SCALE GENOMIC DNA]</scope>
    <source>
        <strain>S88 / ExPEC</strain>
    </source>
</reference>
<comment type="function">
    <text evidence="1">NDH-1 shuttles electrons from NADH, via FMN and iron-sulfur (Fe-S) centers, to quinones in the respiratory chain. The immediate electron acceptor for the enzyme in this species is believed to be ubiquinone. Couples the redox reaction to proton translocation (for every two electrons transferred, four hydrogen ions are translocated across the cytoplasmic membrane), and thus conserves the redox energy in a proton gradient.</text>
</comment>
<comment type="catalytic activity">
    <reaction evidence="1">
        <text>a quinone + NADH + 5 H(+)(in) = a quinol + NAD(+) + 4 H(+)(out)</text>
        <dbReference type="Rhea" id="RHEA:57888"/>
        <dbReference type="ChEBI" id="CHEBI:15378"/>
        <dbReference type="ChEBI" id="CHEBI:24646"/>
        <dbReference type="ChEBI" id="CHEBI:57540"/>
        <dbReference type="ChEBI" id="CHEBI:57945"/>
        <dbReference type="ChEBI" id="CHEBI:132124"/>
    </reaction>
</comment>
<comment type="subunit">
    <text evidence="1">NDH-1 is composed of 13 different subunits. Subunits NuoA, H, J, K, L, M, N constitute the membrane sector of the complex.</text>
</comment>
<comment type="subcellular location">
    <subcellularLocation>
        <location evidence="1">Cell inner membrane</location>
        <topology evidence="1">Multi-pass membrane protein</topology>
    </subcellularLocation>
</comment>
<comment type="similarity">
    <text evidence="1">Belongs to the complex I subunit 4L family.</text>
</comment>
<evidence type="ECO:0000255" key="1">
    <source>
        <dbReference type="HAMAP-Rule" id="MF_01456"/>
    </source>
</evidence>
<keyword id="KW-0997">Cell inner membrane</keyword>
<keyword id="KW-1003">Cell membrane</keyword>
<keyword id="KW-0472">Membrane</keyword>
<keyword id="KW-0520">NAD</keyword>
<keyword id="KW-0874">Quinone</keyword>
<keyword id="KW-1185">Reference proteome</keyword>
<keyword id="KW-1278">Translocase</keyword>
<keyword id="KW-0812">Transmembrane</keyword>
<keyword id="KW-1133">Transmembrane helix</keyword>
<keyword id="KW-0813">Transport</keyword>
<keyword id="KW-0830">Ubiquinone</keyword>
<name>NUOK_ECO45</name>
<sequence>MIPLQHGLILAAILFVLGLTGLVIRRNLLFMLIGLEIMINASALAFVVAGSYWGQTDGQVMYILAISLAAAEASIGLALLLQLHRRRQNLNIDSVSEMRG</sequence>